<evidence type="ECO:0000255" key="1">
    <source>
        <dbReference type="HAMAP-Rule" id="MF_00382"/>
    </source>
</evidence>
<evidence type="ECO:0000305" key="2"/>
<name>RL20_VIBC3</name>
<gene>
    <name evidence="1" type="primary">rplT</name>
    <name type="ordered locus">VC0395_0939</name>
    <name type="ordered locus">VC395_A0327</name>
</gene>
<accession>A5EZ15</accession>
<accession>C3M821</accession>
<reference key="1">
    <citation type="submission" date="2007-03" db="EMBL/GenBank/DDBJ databases">
        <authorList>
            <person name="Heidelberg J."/>
        </authorList>
    </citation>
    <scope>NUCLEOTIDE SEQUENCE [LARGE SCALE GENOMIC DNA]</scope>
    <source>
        <strain>ATCC 39541 / Classical Ogawa 395 / O395</strain>
    </source>
</reference>
<reference key="2">
    <citation type="journal article" date="2008" name="PLoS ONE">
        <title>A recalibrated molecular clock and independent origins for the cholera pandemic clones.</title>
        <authorList>
            <person name="Feng L."/>
            <person name="Reeves P.R."/>
            <person name="Lan R."/>
            <person name="Ren Y."/>
            <person name="Gao C."/>
            <person name="Zhou Z."/>
            <person name="Ren Y."/>
            <person name="Cheng J."/>
            <person name="Wang W."/>
            <person name="Wang J."/>
            <person name="Qian W."/>
            <person name="Li D."/>
            <person name="Wang L."/>
        </authorList>
    </citation>
    <scope>NUCLEOTIDE SEQUENCE [LARGE SCALE GENOMIC DNA]</scope>
    <source>
        <strain>ATCC 39541 / Classical Ogawa 395 / O395</strain>
    </source>
</reference>
<proteinExistence type="inferred from homology"/>
<sequence>MPRVKRGVQARARHKKVLKQAKGYYGARSRVYRVAFQAVIKAGQYAYRDRRAKKRQFRQLWIARINAAARQNGLSYSRFINGLKKASIEIDRKILADIAVFDKAAFAVLVEKAKGAL</sequence>
<protein>
    <recommendedName>
        <fullName evidence="1">Large ribosomal subunit protein bL20</fullName>
    </recommendedName>
    <alternativeName>
        <fullName evidence="2">50S ribosomal protein L20</fullName>
    </alternativeName>
</protein>
<feature type="chain" id="PRO_1000072187" description="Large ribosomal subunit protein bL20">
    <location>
        <begin position="1"/>
        <end position="117"/>
    </location>
</feature>
<keyword id="KW-0687">Ribonucleoprotein</keyword>
<keyword id="KW-0689">Ribosomal protein</keyword>
<keyword id="KW-0694">RNA-binding</keyword>
<keyword id="KW-0699">rRNA-binding</keyword>
<dbReference type="EMBL" id="CP000626">
    <property type="protein sequence ID" value="ABQ19424.1"/>
    <property type="molecule type" value="Genomic_DNA"/>
</dbReference>
<dbReference type="EMBL" id="CP001236">
    <property type="protein sequence ID" value="ACP11167.1"/>
    <property type="molecule type" value="Genomic_DNA"/>
</dbReference>
<dbReference type="RefSeq" id="WP_001138366.1">
    <property type="nucleotide sequence ID" value="NZ_JAACZH010000044.1"/>
</dbReference>
<dbReference type="SMR" id="A5EZ15"/>
<dbReference type="GeneID" id="93954679"/>
<dbReference type="KEGG" id="vco:VC0395_0939"/>
<dbReference type="KEGG" id="vcr:VC395_A0327"/>
<dbReference type="PATRIC" id="fig|345073.21.peg.3087"/>
<dbReference type="eggNOG" id="COG0292">
    <property type="taxonomic scope" value="Bacteria"/>
</dbReference>
<dbReference type="HOGENOM" id="CLU_123265_0_1_6"/>
<dbReference type="OrthoDB" id="9808966at2"/>
<dbReference type="Proteomes" id="UP000000249">
    <property type="component" value="Chromosome 1"/>
</dbReference>
<dbReference type="GO" id="GO:1990904">
    <property type="term" value="C:ribonucleoprotein complex"/>
    <property type="evidence" value="ECO:0007669"/>
    <property type="project" value="UniProtKB-KW"/>
</dbReference>
<dbReference type="GO" id="GO:0005840">
    <property type="term" value="C:ribosome"/>
    <property type="evidence" value="ECO:0007669"/>
    <property type="project" value="UniProtKB-KW"/>
</dbReference>
<dbReference type="GO" id="GO:0019843">
    <property type="term" value="F:rRNA binding"/>
    <property type="evidence" value="ECO:0007669"/>
    <property type="project" value="UniProtKB-UniRule"/>
</dbReference>
<dbReference type="GO" id="GO:0003735">
    <property type="term" value="F:structural constituent of ribosome"/>
    <property type="evidence" value="ECO:0007669"/>
    <property type="project" value="InterPro"/>
</dbReference>
<dbReference type="GO" id="GO:0000027">
    <property type="term" value="P:ribosomal large subunit assembly"/>
    <property type="evidence" value="ECO:0007669"/>
    <property type="project" value="UniProtKB-UniRule"/>
</dbReference>
<dbReference type="GO" id="GO:0006412">
    <property type="term" value="P:translation"/>
    <property type="evidence" value="ECO:0007669"/>
    <property type="project" value="InterPro"/>
</dbReference>
<dbReference type="CDD" id="cd07026">
    <property type="entry name" value="Ribosomal_L20"/>
    <property type="match status" value="1"/>
</dbReference>
<dbReference type="FunFam" id="1.10.1900.20:FF:000001">
    <property type="entry name" value="50S ribosomal protein L20"/>
    <property type="match status" value="1"/>
</dbReference>
<dbReference type="Gene3D" id="6.10.160.10">
    <property type="match status" value="1"/>
</dbReference>
<dbReference type="Gene3D" id="1.10.1900.20">
    <property type="entry name" value="Ribosomal protein L20"/>
    <property type="match status" value="1"/>
</dbReference>
<dbReference type="HAMAP" id="MF_00382">
    <property type="entry name" value="Ribosomal_bL20"/>
    <property type="match status" value="1"/>
</dbReference>
<dbReference type="InterPro" id="IPR005813">
    <property type="entry name" value="Ribosomal_bL20"/>
</dbReference>
<dbReference type="InterPro" id="IPR049946">
    <property type="entry name" value="RIBOSOMAL_L20_CS"/>
</dbReference>
<dbReference type="InterPro" id="IPR035566">
    <property type="entry name" value="Ribosomal_protein_bL20_C"/>
</dbReference>
<dbReference type="NCBIfam" id="TIGR01032">
    <property type="entry name" value="rplT_bact"/>
    <property type="match status" value="1"/>
</dbReference>
<dbReference type="PANTHER" id="PTHR10986">
    <property type="entry name" value="39S RIBOSOMAL PROTEIN L20"/>
    <property type="match status" value="1"/>
</dbReference>
<dbReference type="Pfam" id="PF00453">
    <property type="entry name" value="Ribosomal_L20"/>
    <property type="match status" value="1"/>
</dbReference>
<dbReference type="PRINTS" id="PR00062">
    <property type="entry name" value="RIBOSOMALL20"/>
</dbReference>
<dbReference type="SUPFAM" id="SSF74731">
    <property type="entry name" value="Ribosomal protein L20"/>
    <property type="match status" value="1"/>
</dbReference>
<dbReference type="PROSITE" id="PS00937">
    <property type="entry name" value="RIBOSOMAL_L20"/>
    <property type="match status" value="1"/>
</dbReference>
<organism>
    <name type="scientific">Vibrio cholerae serotype O1 (strain ATCC 39541 / Classical Ogawa 395 / O395)</name>
    <dbReference type="NCBI Taxonomy" id="345073"/>
    <lineage>
        <taxon>Bacteria</taxon>
        <taxon>Pseudomonadati</taxon>
        <taxon>Pseudomonadota</taxon>
        <taxon>Gammaproteobacteria</taxon>
        <taxon>Vibrionales</taxon>
        <taxon>Vibrionaceae</taxon>
        <taxon>Vibrio</taxon>
    </lineage>
</organism>
<comment type="function">
    <text evidence="1">Binds directly to 23S ribosomal RNA and is necessary for the in vitro assembly process of the 50S ribosomal subunit. It is not involved in the protein synthesizing functions of that subunit.</text>
</comment>
<comment type="similarity">
    <text evidence="1">Belongs to the bacterial ribosomal protein bL20 family.</text>
</comment>